<organism>
    <name type="scientific">Buchnera aphidicola subsp. Acyrthosiphon pisum (strain APS)</name>
    <name type="common">Acyrthosiphon pisum symbiotic bacterium</name>
    <dbReference type="NCBI Taxonomy" id="107806"/>
    <lineage>
        <taxon>Bacteria</taxon>
        <taxon>Pseudomonadati</taxon>
        <taxon>Pseudomonadota</taxon>
        <taxon>Gammaproteobacteria</taxon>
        <taxon>Enterobacterales</taxon>
        <taxon>Erwiniaceae</taxon>
        <taxon>Buchnera</taxon>
    </lineage>
</organism>
<reference key="1">
    <citation type="journal article" date="2000" name="Nature">
        <title>Genome sequence of the endocellular bacterial symbiont of aphids Buchnera sp. APS.</title>
        <authorList>
            <person name="Shigenobu S."/>
            <person name="Watanabe H."/>
            <person name="Hattori M."/>
            <person name="Sakaki Y."/>
            <person name="Ishikawa H."/>
        </authorList>
    </citation>
    <scope>NUCLEOTIDE SEQUENCE [LARGE SCALE GENOMIC DNA]</scope>
    <source>
        <strain>APS</strain>
    </source>
</reference>
<sequence>MVAKNVKTFALGVEYDGSYYHGWQRQKILPSIQEEIEKALSIIANHKIDVVCAGRTDAGVHSIGQVIHFKTTANRKKSSWSIGVNSYLSENISVVWVKEVTENFHARYSAITRSYRYIIYNYSLRSAIFQTKLNHIYRKLNVDKMNFEAQFLLGEHDFTSFRALGCQSHSPWRNITKLNVFRFHNWVVVDITANSFLHHMVRNIVGSLIEVGISKKKEYWIKDLLEKKDRSHAGATAPAKGLYLVYVEYPLHFNLPRSAYTSIFFK</sequence>
<evidence type="ECO:0000255" key="1">
    <source>
        <dbReference type="HAMAP-Rule" id="MF_00171"/>
    </source>
</evidence>
<proteinExistence type="inferred from homology"/>
<name>TRUA_BUCAI</name>
<protein>
    <recommendedName>
        <fullName evidence="1">tRNA pseudouridine synthase A</fullName>
        <ecNumber evidence="1">5.4.99.12</ecNumber>
    </recommendedName>
    <alternativeName>
        <fullName evidence="1">tRNA pseudouridine(38-40) synthase</fullName>
    </alternativeName>
    <alternativeName>
        <fullName evidence="1">tRNA pseudouridylate synthase I</fullName>
    </alternativeName>
    <alternativeName>
        <fullName evidence="1">tRNA-uridine isomerase I</fullName>
    </alternativeName>
</protein>
<dbReference type="EC" id="5.4.99.12" evidence="1"/>
<dbReference type="EMBL" id="BA000003">
    <property type="protein sequence ID" value="BAB12916.1"/>
    <property type="molecule type" value="Genomic_DNA"/>
</dbReference>
<dbReference type="RefSeq" id="NP_240030.1">
    <property type="nucleotide sequence ID" value="NC_002528.1"/>
</dbReference>
<dbReference type="RefSeq" id="WP_010895997.1">
    <property type="nucleotide sequence ID" value="NC_002528.1"/>
</dbReference>
<dbReference type="SMR" id="P57295"/>
<dbReference type="STRING" id="563178.BUAP5A_196"/>
<dbReference type="EnsemblBacteria" id="BAB12916">
    <property type="protein sequence ID" value="BAB12916"/>
    <property type="gene ID" value="BAB12916"/>
</dbReference>
<dbReference type="KEGG" id="buc:BU199"/>
<dbReference type="PATRIC" id="fig|107806.10.peg.210"/>
<dbReference type="eggNOG" id="COG0101">
    <property type="taxonomic scope" value="Bacteria"/>
</dbReference>
<dbReference type="HOGENOM" id="CLU_014673_0_2_6"/>
<dbReference type="Proteomes" id="UP000001806">
    <property type="component" value="Chromosome"/>
</dbReference>
<dbReference type="GO" id="GO:0003723">
    <property type="term" value="F:RNA binding"/>
    <property type="evidence" value="ECO:0007669"/>
    <property type="project" value="InterPro"/>
</dbReference>
<dbReference type="GO" id="GO:0160147">
    <property type="term" value="F:tRNA pseudouridine(38-40) synthase activity"/>
    <property type="evidence" value="ECO:0007669"/>
    <property type="project" value="UniProtKB-EC"/>
</dbReference>
<dbReference type="GO" id="GO:0031119">
    <property type="term" value="P:tRNA pseudouridine synthesis"/>
    <property type="evidence" value="ECO:0007669"/>
    <property type="project" value="UniProtKB-UniRule"/>
</dbReference>
<dbReference type="CDD" id="cd02570">
    <property type="entry name" value="PseudoU_synth_EcTruA"/>
    <property type="match status" value="1"/>
</dbReference>
<dbReference type="FunFam" id="3.30.70.580:FF:000001">
    <property type="entry name" value="tRNA pseudouridine synthase A"/>
    <property type="match status" value="1"/>
</dbReference>
<dbReference type="Gene3D" id="3.30.70.660">
    <property type="entry name" value="Pseudouridine synthase I, catalytic domain, C-terminal subdomain"/>
    <property type="match status" value="1"/>
</dbReference>
<dbReference type="Gene3D" id="3.30.70.580">
    <property type="entry name" value="Pseudouridine synthase I, catalytic domain, N-terminal subdomain"/>
    <property type="match status" value="1"/>
</dbReference>
<dbReference type="HAMAP" id="MF_00171">
    <property type="entry name" value="TruA"/>
    <property type="match status" value="1"/>
</dbReference>
<dbReference type="InterPro" id="IPR020103">
    <property type="entry name" value="PsdUridine_synth_cat_dom_sf"/>
</dbReference>
<dbReference type="InterPro" id="IPR001406">
    <property type="entry name" value="PsdUridine_synth_TruA"/>
</dbReference>
<dbReference type="InterPro" id="IPR020097">
    <property type="entry name" value="PsdUridine_synth_TruA_a/b_dom"/>
</dbReference>
<dbReference type="InterPro" id="IPR020095">
    <property type="entry name" value="PsdUridine_synth_TruA_C"/>
</dbReference>
<dbReference type="InterPro" id="IPR020094">
    <property type="entry name" value="TruA/RsuA/RluB/E/F_N"/>
</dbReference>
<dbReference type="NCBIfam" id="TIGR00071">
    <property type="entry name" value="hisT_truA"/>
    <property type="match status" value="1"/>
</dbReference>
<dbReference type="PANTHER" id="PTHR11142">
    <property type="entry name" value="PSEUDOURIDYLATE SYNTHASE"/>
    <property type="match status" value="1"/>
</dbReference>
<dbReference type="PANTHER" id="PTHR11142:SF0">
    <property type="entry name" value="TRNA PSEUDOURIDINE SYNTHASE-LIKE 1"/>
    <property type="match status" value="1"/>
</dbReference>
<dbReference type="Pfam" id="PF01416">
    <property type="entry name" value="PseudoU_synth_1"/>
    <property type="match status" value="2"/>
</dbReference>
<dbReference type="PIRSF" id="PIRSF001430">
    <property type="entry name" value="tRNA_psdUrid_synth"/>
    <property type="match status" value="1"/>
</dbReference>
<dbReference type="SUPFAM" id="SSF55120">
    <property type="entry name" value="Pseudouridine synthase"/>
    <property type="match status" value="1"/>
</dbReference>
<keyword id="KW-0413">Isomerase</keyword>
<keyword id="KW-1185">Reference proteome</keyword>
<keyword id="KW-0819">tRNA processing</keyword>
<feature type="chain" id="PRO_0000057348" description="tRNA pseudouridine synthase A">
    <location>
        <begin position="1"/>
        <end position="266"/>
    </location>
</feature>
<feature type="active site" description="Nucleophile" evidence="1">
    <location>
        <position position="57"/>
    </location>
</feature>
<feature type="binding site" evidence="1">
    <location>
        <position position="115"/>
    </location>
    <ligand>
        <name>substrate</name>
    </ligand>
</feature>
<accession>P57295</accession>
<gene>
    <name evidence="1" type="primary">truA</name>
    <name type="ordered locus">BU199</name>
</gene>
<comment type="function">
    <text evidence="1">Formation of pseudouridine at positions 38, 39 and 40 in the anticodon stem and loop of transfer RNAs.</text>
</comment>
<comment type="catalytic activity">
    <reaction evidence="1">
        <text>uridine(38/39/40) in tRNA = pseudouridine(38/39/40) in tRNA</text>
        <dbReference type="Rhea" id="RHEA:22376"/>
        <dbReference type="Rhea" id="RHEA-COMP:10085"/>
        <dbReference type="Rhea" id="RHEA-COMP:10087"/>
        <dbReference type="ChEBI" id="CHEBI:65314"/>
        <dbReference type="ChEBI" id="CHEBI:65315"/>
        <dbReference type="EC" id="5.4.99.12"/>
    </reaction>
</comment>
<comment type="subunit">
    <text evidence="1">Homodimer.</text>
</comment>
<comment type="similarity">
    <text evidence="1">Belongs to the tRNA pseudouridine synthase TruA family.</text>
</comment>